<comment type="function">
    <text evidence="1">Catalyzes the methylation of C-1 in cobalt-precorrin-5B to form cobalt-precorrin-6A.</text>
</comment>
<comment type="catalytic activity">
    <reaction evidence="1">
        <text>Co-precorrin-5B + S-adenosyl-L-methionine = Co-precorrin-6A + S-adenosyl-L-homocysteine</text>
        <dbReference type="Rhea" id="RHEA:26285"/>
        <dbReference type="ChEBI" id="CHEBI:57856"/>
        <dbReference type="ChEBI" id="CHEBI:59789"/>
        <dbReference type="ChEBI" id="CHEBI:60063"/>
        <dbReference type="ChEBI" id="CHEBI:60064"/>
        <dbReference type="EC" id="2.1.1.195"/>
    </reaction>
</comment>
<comment type="pathway">
    <text evidence="1">Cofactor biosynthesis; adenosylcobalamin biosynthesis; cob(II)yrinate a,c-diamide from sirohydrochlorin (anaerobic route): step 6/10.</text>
</comment>
<comment type="similarity">
    <text evidence="1">Belongs to the CbiD family.</text>
</comment>
<dbReference type="EC" id="2.1.1.195" evidence="1"/>
<dbReference type="EMBL" id="CP000742">
    <property type="protein sequence ID" value="ABR54425.1"/>
    <property type="molecule type" value="Genomic_DNA"/>
</dbReference>
<dbReference type="RefSeq" id="WP_011972328.1">
    <property type="nucleotide sequence ID" value="NC_009634.1"/>
</dbReference>
<dbReference type="SMR" id="A6UPK3"/>
<dbReference type="STRING" id="406327.Mevan_0518"/>
<dbReference type="GeneID" id="5325708"/>
<dbReference type="KEGG" id="mvn:Mevan_0518"/>
<dbReference type="eggNOG" id="arCOG04383">
    <property type="taxonomic scope" value="Archaea"/>
</dbReference>
<dbReference type="HOGENOM" id="CLU_041273_1_0_2"/>
<dbReference type="OrthoDB" id="10423at2157"/>
<dbReference type="UniPathway" id="UPA00148">
    <property type="reaction ID" value="UER00227"/>
</dbReference>
<dbReference type="Proteomes" id="UP000001107">
    <property type="component" value="Chromosome"/>
</dbReference>
<dbReference type="GO" id="GO:0043780">
    <property type="term" value="F:cobalt-precorrin-5B C1-methyltransferase activity"/>
    <property type="evidence" value="ECO:0007669"/>
    <property type="project" value="RHEA"/>
</dbReference>
<dbReference type="GO" id="GO:0019251">
    <property type="term" value="P:anaerobic cobalamin biosynthetic process"/>
    <property type="evidence" value="ECO:0007669"/>
    <property type="project" value="UniProtKB-UniRule"/>
</dbReference>
<dbReference type="GO" id="GO:0032259">
    <property type="term" value="P:methylation"/>
    <property type="evidence" value="ECO:0007669"/>
    <property type="project" value="UniProtKB-KW"/>
</dbReference>
<dbReference type="Gene3D" id="3.30.2110.10">
    <property type="entry name" value="CbiD-like"/>
    <property type="match status" value="1"/>
</dbReference>
<dbReference type="HAMAP" id="MF_00787">
    <property type="entry name" value="CbiD"/>
    <property type="match status" value="1"/>
</dbReference>
<dbReference type="InterPro" id="IPR002748">
    <property type="entry name" value="CbiD"/>
</dbReference>
<dbReference type="InterPro" id="IPR036074">
    <property type="entry name" value="CbiD_sf"/>
</dbReference>
<dbReference type="NCBIfam" id="TIGR00312">
    <property type="entry name" value="cbiD"/>
    <property type="match status" value="1"/>
</dbReference>
<dbReference type="PANTHER" id="PTHR35863">
    <property type="entry name" value="COBALT-PRECORRIN-5B C(1)-METHYLTRANSFERASE"/>
    <property type="match status" value="1"/>
</dbReference>
<dbReference type="PANTHER" id="PTHR35863:SF1">
    <property type="entry name" value="COBALT-PRECORRIN-5B C(1)-METHYLTRANSFERASE"/>
    <property type="match status" value="1"/>
</dbReference>
<dbReference type="Pfam" id="PF01888">
    <property type="entry name" value="CbiD"/>
    <property type="match status" value="1"/>
</dbReference>
<dbReference type="PIRSF" id="PIRSF026782">
    <property type="entry name" value="CbiD"/>
    <property type="match status" value="1"/>
</dbReference>
<dbReference type="SUPFAM" id="SSF111342">
    <property type="entry name" value="CbiD-like"/>
    <property type="match status" value="1"/>
</dbReference>
<proteinExistence type="inferred from homology"/>
<evidence type="ECO:0000255" key="1">
    <source>
        <dbReference type="HAMAP-Rule" id="MF_00787"/>
    </source>
</evidence>
<name>CBID_METVS</name>
<organism>
    <name type="scientific">Methanococcus vannielii (strain ATCC 35089 / DSM 1224 / JCM 13029 / OCM 148 / SB)</name>
    <dbReference type="NCBI Taxonomy" id="406327"/>
    <lineage>
        <taxon>Archaea</taxon>
        <taxon>Methanobacteriati</taxon>
        <taxon>Methanobacteriota</taxon>
        <taxon>Methanomada group</taxon>
        <taxon>Methanococci</taxon>
        <taxon>Methanococcales</taxon>
        <taxon>Methanococcaceae</taxon>
        <taxon>Methanococcus</taxon>
    </lineage>
</organism>
<protein>
    <recommendedName>
        <fullName evidence="1">Cobalt-precorrin-5B C(1)-methyltransferase</fullName>
        <ecNumber evidence="1">2.1.1.195</ecNumber>
    </recommendedName>
    <alternativeName>
        <fullName evidence="1">Cobalt-precorrin-6A synthase</fullName>
    </alternativeName>
</protein>
<reference key="1">
    <citation type="submission" date="2007-06" db="EMBL/GenBank/DDBJ databases">
        <title>Complete sequence of Methanococcus vannielii SB.</title>
        <authorList>
            <consortium name="US DOE Joint Genome Institute"/>
            <person name="Copeland A."/>
            <person name="Lucas S."/>
            <person name="Lapidus A."/>
            <person name="Barry K."/>
            <person name="Glavina del Rio T."/>
            <person name="Dalin E."/>
            <person name="Tice H."/>
            <person name="Pitluck S."/>
            <person name="Chain P."/>
            <person name="Malfatti S."/>
            <person name="Shin M."/>
            <person name="Vergez L."/>
            <person name="Schmutz J."/>
            <person name="Larimer F."/>
            <person name="Land M."/>
            <person name="Hauser L."/>
            <person name="Kyrpides N."/>
            <person name="Anderson I."/>
            <person name="Sieprawska-Lupa M."/>
            <person name="Whitman W.B."/>
            <person name="Richardson P."/>
        </authorList>
    </citation>
    <scope>NUCLEOTIDE SEQUENCE [LARGE SCALE GENOMIC DNA]</scope>
    <source>
        <strain>ATCC 35089 / DSM 1224 / JCM 13029 / OCM 148 / SB</strain>
    </source>
</reference>
<sequence>MTIDFRTETTFGYTTGACAVSGAYSALYFLKNNKKLDFVEILNLKNETLIIPIQNIERSENTAFATVKKFSGKDIDITNNMTINVEVTLQKLDNNSNLKLIEIFGGNGVGIVTKRGLQIDVGDYAINPKPREMIEKNLISLLNDGEKAVVRISIPNGDEISKKTLNPKLGIIGGISILGTTGIVRPMSNDAYKESLLPQIDIAIQNGFENLVFVPGNIGTKYAKSVLNIEEDQIIEVSNFWGFMLEKAGEKGVKDITVFGHAGKIVKLAGGIFDTHSKVSDARNEILCAYTSTLCNNQELMKKILQSNTTEEIIEILAEKDILNEVFNLISKRVVERLCLRFPNIKFSCIIVDINGKILGKCFLGDRFD</sequence>
<feature type="chain" id="PRO_1000046867" description="Cobalt-precorrin-5B C(1)-methyltransferase">
    <location>
        <begin position="1"/>
        <end position="369"/>
    </location>
</feature>
<keyword id="KW-0169">Cobalamin biosynthesis</keyword>
<keyword id="KW-0489">Methyltransferase</keyword>
<keyword id="KW-0949">S-adenosyl-L-methionine</keyword>
<keyword id="KW-0808">Transferase</keyword>
<accession>A6UPK3</accession>
<gene>
    <name evidence="1" type="primary">cbiD</name>
    <name type="ordered locus">Mevan_0518</name>
</gene>